<evidence type="ECO:0000250" key="1"/>
<evidence type="ECO:0000255" key="2">
    <source>
        <dbReference type="HAMAP-Rule" id="MF_01395"/>
    </source>
</evidence>
<evidence type="ECO:0000255" key="3">
    <source>
        <dbReference type="PROSITE-ProRule" id="PRU01136"/>
    </source>
</evidence>
<dbReference type="EC" id="2.1.3.15" evidence="2"/>
<dbReference type="EMBL" id="AP009371">
    <property type="protein sequence ID" value="BAF50206.1"/>
    <property type="molecule type" value="Genomic_DNA"/>
</dbReference>
<dbReference type="RefSeq" id="YP_001123382.1">
    <property type="nucleotide sequence ID" value="NC_009270.1"/>
</dbReference>
<dbReference type="SMR" id="A4QKK1"/>
<dbReference type="GeneID" id="4961680"/>
<dbReference type="UniPathway" id="UPA00655">
    <property type="reaction ID" value="UER00711"/>
</dbReference>
<dbReference type="GO" id="GO:0009317">
    <property type="term" value="C:acetyl-CoA carboxylase complex"/>
    <property type="evidence" value="ECO:0007669"/>
    <property type="project" value="InterPro"/>
</dbReference>
<dbReference type="GO" id="GO:0009570">
    <property type="term" value="C:chloroplast stroma"/>
    <property type="evidence" value="ECO:0007669"/>
    <property type="project" value="UniProtKB-SubCell"/>
</dbReference>
<dbReference type="GO" id="GO:0003989">
    <property type="term" value="F:acetyl-CoA carboxylase activity"/>
    <property type="evidence" value="ECO:0007669"/>
    <property type="project" value="InterPro"/>
</dbReference>
<dbReference type="GO" id="GO:0005524">
    <property type="term" value="F:ATP binding"/>
    <property type="evidence" value="ECO:0007669"/>
    <property type="project" value="UniProtKB-KW"/>
</dbReference>
<dbReference type="GO" id="GO:0016743">
    <property type="term" value="F:carboxyl- or carbamoyltransferase activity"/>
    <property type="evidence" value="ECO:0007669"/>
    <property type="project" value="UniProtKB-UniRule"/>
</dbReference>
<dbReference type="GO" id="GO:0008270">
    <property type="term" value="F:zinc ion binding"/>
    <property type="evidence" value="ECO:0007669"/>
    <property type="project" value="UniProtKB-UniRule"/>
</dbReference>
<dbReference type="GO" id="GO:0006633">
    <property type="term" value="P:fatty acid biosynthetic process"/>
    <property type="evidence" value="ECO:0007669"/>
    <property type="project" value="UniProtKB-KW"/>
</dbReference>
<dbReference type="GO" id="GO:2001295">
    <property type="term" value="P:malonyl-CoA biosynthetic process"/>
    <property type="evidence" value="ECO:0007669"/>
    <property type="project" value="UniProtKB-UniRule"/>
</dbReference>
<dbReference type="Gene3D" id="3.90.226.10">
    <property type="entry name" value="2-enoyl-CoA Hydratase, Chain A, domain 1"/>
    <property type="match status" value="1"/>
</dbReference>
<dbReference type="HAMAP" id="MF_01395">
    <property type="entry name" value="AcetylCoA_CT_beta"/>
    <property type="match status" value="1"/>
</dbReference>
<dbReference type="InterPro" id="IPR034733">
    <property type="entry name" value="AcCoA_carboxyl_beta"/>
</dbReference>
<dbReference type="InterPro" id="IPR000438">
    <property type="entry name" value="Acetyl_CoA_COase_Trfase_b_su"/>
</dbReference>
<dbReference type="InterPro" id="IPR029045">
    <property type="entry name" value="ClpP/crotonase-like_dom_sf"/>
</dbReference>
<dbReference type="InterPro" id="IPR011762">
    <property type="entry name" value="COA_CT_N"/>
</dbReference>
<dbReference type="NCBIfam" id="TIGR00515">
    <property type="entry name" value="accD"/>
    <property type="match status" value="1"/>
</dbReference>
<dbReference type="PANTHER" id="PTHR42995">
    <property type="entry name" value="ACETYL-COENZYME A CARBOXYLASE CARBOXYL TRANSFERASE SUBUNIT BETA, CHLOROPLASTIC"/>
    <property type="match status" value="1"/>
</dbReference>
<dbReference type="PANTHER" id="PTHR42995:SF5">
    <property type="entry name" value="ACETYL-COENZYME A CARBOXYLASE CARBOXYL TRANSFERASE SUBUNIT BETA, CHLOROPLASTIC"/>
    <property type="match status" value="1"/>
</dbReference>
<dbReference type="Pfam" id="PF01039">
    <property type="entry name" value="Carboxyl_trans"/>
    <property type="match status" value="1"/>
</dbReference>
<dbReference type="PRINTS" id="PR01070">
    <property type="entry name" value="ACCCTRFRASEB"/>
</dbReference>
<dbReference type="SUPFAM" id="SSF52096">
    <property type="entry name" value="ClpP/crotonase"/>
    <property type="match status" value="1"/>
</dbReference>
<dbReference type="PROSITE" id="PS50980">
    <property type="entry name" value="COA_CT_NTER"/>
    <property type="match status" value="1"/>
</dbReference>
<protein>
    <recommendedName>
        <fullName evidence="2">Acetyl-coenzyme A carboxylase carboxyl transferase subunit beta, chloroplastic</fullName>
        <shortName evidence="2">ACCase subunit beta</shortName>
        <shortName evidence="2">Acetyl-CoA carboxylase carboxyltransferase subunit beta</shortName>
        <ecNumber evidence="2">2.1.3.15</ecNumber>
    </recommendedName>
</protein>
<geneLocation type="chloroplast"/>
<accession>A4QKK1</accession>
<organism>
    <name type="scientific">Capsella bursa-pastoris</name>
    <name type="common">Shepherd's purse</name>
    <name type="synonym">Thlaspi bursa-pastoris</name>
    <dbReference type="NCBI Taxonomy" id="3719"/>
    <lineage>
        <taxon>Eukaryota</taxon>
        <taxon>Viridiplantae</taxon>
        <taxon>Streptophyta</taxon>
        <taxon>Embryophyta</taxon>
        <taxon>Tracheophyta</taxon>
        <taxon>Spermatophyta</taxon>
        <taxon>Magnoliopsida</taxon>
        <taxon>eudicotyledons</taxon>
        <taxon>Gunneridae</taxon>
        <taxon>Pentapetalae</taxon>
        <taxon>rosids</taxon>
        <taxon>malvids</taxon>
        <taxon>Brassicales</taxon>
        <taxon>Brassicaceae</taxon>
        <taxon>Camelineae</taxon>
        <taxon>Capsella</taxon>
    </lineage>
</organism>
<reference key="1">
    <citation type="submission" date="2007-03" db="EMBL/GenBank/DDBJ databases">
        <title>Sequencing analysis of Capsella bursa-pastoris JO22 chloroplast DNA.</title>
        <authorList>
            <person name="Hosouchi T."/>
            <person name="Tsuruoka H."/>
            <person name="Kotani H."/>
        </authorList>
    </citation>
    <scope>NUCLEOTIDE SEQUENCE [LARGE SCALE GENOMIC DNA]</scope>
</reference>
<proteinExistence type="inferred from homology"/>
<gene>
    <name evidence="2" type="primary">accD</name>
</gene>
<keyword id="KW-0067">ATP-binding</keyword>
<keyword id="KW-0150">Chloroplast</keyword>
<keyword id="KW-0275">Fatty acid biosynthesis</keyword>
<keyword id="KW-0276">Fatty acid metabolism</keyword>
<keyword id="KW-0444">Lipid biosynthesis</keyword>
<keyword id="KW-0443">Lipid metabolism</keyword>
<keyword id="KW-0479">Metal-binding</keyword>
<keyword id="KW-0547">Nucleotide-binding</keyword>
<keyword id="KW-0934">Plastid</keyword>
<keyword id="KW-0808">Transferase</keyword>
<keyword id="KW-0862">Zinc</keyword>
<keyword id="KW-0863">Zinc-finger</keyword>
<feature type="chain" id="PRO_0000359126" description="Acetyl-coenzyme A carboxylase carboxyl transferase subunit beta, chloroplastic">
    <location>
        <begin position="1"/>
        <end position="484"/>
    </location>
</feature>
<feature type="domain" description="CoA carboxyltransferase N-terminal" evidence="3">
    <location>
        <begin position="223"/>
        <end position="484"/>
    </location>
</feature>
<feature type="zinc finger region" description="C4-type" evidence="2">
    <location>
        <begin position="227"/>
        <end position="246"/>
    </location>
</feature>
<feature type="binding site" evidence="2">
    <location>
        <position position="227"/>
    </location>
    <ligand>
        <name>Zn(2+)</name>
        <dbReference type="ChEBI" id="CHEBI:29105"/>
    </ligand>
</feature>
<feature type="binding site" evidence="2">
    <location>
        <position position="230"/>
    </location>
    <ligand>
        <name>Zn(2+)</name>
        <dbReference type="ChEBI" id="CHEBI:29105"/>
    </ligand>
</feature>
<feature type="binding site" evidence="2">
    <location>
        <position position="243"/>
    </location>
    <ligand>
        <name>Zn(2+)</name>
        <dbReference type="ChEBI" id="CHEBI:29105"/>
    </ligand>
</feature>
<feature type="binding site" evidence="2">
    <location>
        <position position="246"/>
    </location>
    <ligand>
        <name>Zn(2+)</name>
        <dbReference type="ChEBI" id="CHEBI:29105"/>
    </ligand>
</feature>
<sequence>MEKSWFNFMFSKGELEYRGELSKAMDSFAPGEKTTISQDRFIYDMDKNFYGWGGRSSYSNNVDLLVSSKDIRNFISDNTFFVRDSNKNSYSIYFDIKKKIFEIDNDFSDLEKFFYSYCSSSYLNNRSKGDNDLHYDSYIKNTKYNCTNHINSCIDSYFRSYICIDSNFLSDSNNYNESYIYNFICSESGKIRESKNYKIRTNRNRSNLISSKDFDITQNYNQLWIQCDNCYGLMYKKVKINVCEQCGHYLKMSSSERIELSIDPGTWNPMDEDMVSADPIKFHSKEEPYKNRIDSAQKTTGLTDAVQTGTGQLNGIPVALGVMDFRFMGGSMGSVVGEKITRLVEYATNQCLPLILVCSSGGARMQEGSLSLMQMAKISSVLCDYQSSKKLFYISILTSPTTGGVTASFGMLGDIIIAEPYAYIAFAGKRVIEQTLKKAVPEGSQAAESLLRKGLLDAIVPRNLLKSVLSELFQLHAFFPLNKN</sequence>
<name>ACCD_CAPBU</name>
<comment type="function">
    <text evidence="2">Component of the acetyl coenzyme A carboxylase (ACC) complex. Biotin carboxylase (BC) catalyzes the carboxylation of biotin on its carrier protein (BCCP) and then the CO(2) group is transferred by the transcarboxylase to acetyl-CoA to form malonyl-CoA.</text>
</comment>
<comment type="catalytic activity">
    <reaction evidence="2">
        <text>N(6)-carboxybiotinyl-L-lysyl-[protein] + acetyl-CoA = N(6)-biotinyl-L-lysyl-[protein] + malonyl-CoA</text>
        <dbReference type="Rhea" id="RHEA:54728"/>
        <dbReference type="Rhea" id="RHEA-COMP:10505"/>
        <dbReference type="Rhea" id="RHEA-COMP:10506"/>
        <dbReference type="ChEBI" id="CHEBI:57288"/>
        <dbReference type="ChEBI" id="CHEBI:57384"/>
        <dbReference type="ChEBI" id="CHEBI:83144"/>
        <dbReference type="ChEBI" id="CHEBI:83145"/>
        <dbReference type="EC" id="2.1.3.15"/>
    </reaction>
</comment>
<comment type="cofactor">
    <cofactor evidence="2">
        <name>Zn(2+)</name>
        <dbReference type="ChEBI" id="CHEBI:29105"/>
    </cofactor>
    <text evidence="2">Binds 1 zinc ion per subunit.</text>
</comment>
<comment type="pathway">
    <text evidence="2">Lipid metabolism; malonyl-CoA biosynthesis; malonyl-CoA from acetyl-CoA: step 1/1.</text>
</comment>
<comment type="subunit">
    <text evidence="1">Acetyl-CoA carboxylase is a heterohexamer composed of biotin carboxyl carrier protein, biotin carboxylase and 2 subunits each of ACCase subunit alpha and ACCase plastid-coded subunit beta (accD).</text>
</comment>
<comment type="subcellular location">
    <subcellularLocation>
        <location evidence="2">Plastid</location>
        <location evidence="2">Chloroplast stroma</location>
    </subcellularLocation>
</comment>
<comment type="similarity">
    <text evidence="2">Belongs to the AccD/PCCB family.</text>
</comment>